<protein>
    <recommendedName>
        <fullName evidence="15">Microtubule-actin cross-linking factor 1, isoforms 1/2/3/4</fullName>
    </recommendedName>
    <alternativeName>
        <fullName>Actin cross-linking family 7</fullName>
    </alternativeName>
</protein>
<gene>
    <name evidence="16" type="primary">Macf1</name>
    <name type="synonym">Acf7</name>
    <name type="synonym">Aclp7</name>
    <name type="synonym">Kiaa0754</name>
    <name type="synonym">Macf</name>
</gene>
<dbReference type="EMBL" id="AF150755">
    <property type="protein sequence ID" value="AAD32244.1"/>
    <property type="molecule type" value="mRNA"/>
</dbReference>
<dbReference type="EMBL" id="DQ067088">
    <property type="protein sequence ID" value="AAY78553.1"/>
    <property type="molecule type" value="mRNA"/>
</dbReference>
<dbReference type="EMBL" id="AL606932">
    <property type="protein sequence ID" value="CAM18553.1"/>
    <property type="status" value="ALT_SEQ"/>
    <property type="molecule type" value="Genomic_DNA"/>
</dbReference>
<dbReference type="EMBL" id="AL606918">
    <property type="protein sequence ID" value="CAM18553.1"/>
    <property type="status" value="JOINED"/>
    <property type="molecule type" value="Genomic_DNA"/>
</dbReference>
<dbReference type="EMBL" id="AL606918">
    <property type="protein sequence ID" value="CAM20969.1"/>
    <property type="status" value="ALT_SEQ"/>
    <property type="molecule type" value="Genomic_DNA"/>
</dbReference>
<dbReference type="EMBL" id="AL606932">
    <property type="protein sequence ID" value="CAM20969.1"/>
    <property type="status" value="JOINED"/>
    <property type="molecule type" value="Genomic_DNA"/>
</dbReference>
<dbReference type="EMBL" id="U67203">
    <property type="protein sequence ID" value="AAC52988.1"/>
    <property type="molecule type" value="mRNA"/>
</dbReference>
<dbReference type="EMBL" id="U67204">
    <property type="protein sequence ID" value="AAC52989.1"/>
    <property type="status" value="ALT_INIT"/>
    <property type="molecule type" value="mRNA"/>
</dbReference>
<dbReference type="EMBL" id="U67205">
    <property type="protein sequence ID" value="AAC52990.1"/>
    <property type="molecule type" value="mRNA"/>
</dbReference>
<dbReference type="PIR" id="T30847">
    <property type="entry name" value="T30847"/>
</dbReference>
<dbReference type="PIR" id="T30849">
    <property type="entry name" value="T30849"/>
</dbReference>
<dbReference type="PIR" id="T42725">
    <property type="entry name" value="T42725"/>
</dbReference>
<dbReference type="SMR" id="Q9QXZ0"/>
<dbReference type="FunCoup" id="Q9QXZ0">
    <property type="interactions" value="974"/>
</dbReference>
<dbReference type="IntAct" id="Q9QXZ0">
    <property type="interactions" value="19"/>
</dbReference>
<dbReference type="MINT" id="Q9QXZ0"/>
<dbReference type="STRING" id="10090.ENSMUSP00000095507"/>
<dbReference type="GlyGen" id="Q9QXZ0">
    <property type="glycosylation" value="13 sites, 3 N-linked glycans (3 sites), 1 O-linked glycan (9 sites)"/>
</dbReference>
<dbReference type="iPTMnet" id="Q9QXZ0"/>
<dbReference type="PhosphoSitePlus" id="Q9QXZ0"/>
<dbReference type="SwissPalm" id="Q9QXZ0"/>
<dbReference type="jPOST" id="Q9QXZ0"/>
<dbReference type="PaxDb" id="10090-ENSMUSP00000119600"/>
<dbReference type="PeptideAtlas" id="Q9QXZ0"/>
<dbReference type="ProteomicsDB" id="291994">
    <molecule id="Q9QXZ0-1"/>
</dbReference>
<dbReference type="ProteomicsDB" id="291995">
    <molecule id="Q9QXZ0-2"/>
</dbReference>
<dbReference type="ProteomicsDB" id="291996">
    <molecule id="Q9QXZ0-3"/>
</dbReference>
<dbReference type="ProteomicsDB" id="291997">
    <molecule id="Q9QXZ0-4"/>
</dbReference>
<dbReference type="Pumba" id="Q9QXZ0"/>
<dbReference type="AGR" id="MGI:108559"/>
<dbReference type="MGI" id="MGI:108559">
    <property type="gene designation" value="Macf1"/>
</dbReference>
<dbReference type="eggNOG" id="KOG0516">
    <property type="taxonomic scope" value="Eukaryota"/>
</dbReference>
<dbReference type="InParanoid" id="Q9QXZ0"/>
<dbReference type="CD-CODE" id="CE726F99">
    <property type="entry name" value="Postsynaptic density"/>
</dbReference>
<dbReference type="ChiTaRS" id="Macf1">
    <property type="organism name" value="mouse"/>
</dbReference>
<dbReference type="PRO" id="PR:Q9QXZ0"/>
<dbReference type="Proteomes" id="UP000000589">
    <property type="component" value="Unplaced"/>
</dbReference>
<dbReference type="RNAct" id="Q9QXZ0">
    <property type="molecule type" value="protein"/>
</dbReference>
<dbReference type="GO" id="GO:0015629">
    <property type="term" value="C:actin cytoskeleton"/>
    <property type="evidence" value="ECO:0000314"/>
    <property type="project" value="MGI"/>
</dbReference>
<dbReference type="GO" id="GO:0005938">
    <property type="term" value="C:cell cortex"/>
    <property type="evidence" value="ECO:0000266"/>
    <property type="project" value="MGI"/>
</dbReference>
<dbReference type="GO" id="GO:0005737">
    <property type="term" value="C:cytoplasm"/>
    <property type="evidence" value="ECO:0000314"/>
    <property type="project" value="UniProtKB"/>
</dbReference>
<dbReference type="GO" id="GO:0005794">
    <property type="term" value="C:Golgi apparatus"/>
    <property type="evidence" value="ECO:0000250"/>
    <property type="project" value="UniProtKB"/>
</dbReference>
<dbReference type="GO" id="GO:0016020">
    <property type="term" value="C:membrane"/>
    <property type="evidence" value="ECO:0000250"/>
    <property type="project" value="UniProtKB"/>
</dbReference>
<dbReference type="GO" id="GO:0005874">
    <property type="term" value="C:microtubule"/>
    <property type="evidence" value="ECO:0000314"/>
    <property type="project" value="UniProtKB"/>
</dbReference>
<dbReference type="GO" id="GO:0015630">
    <property type="term" value="C:microtubule cytoskeleton"/>
    <property type="evidence" value="ECO:0000314"/>
    <property type="project" value="MGI"/>
</dbReference>
<dbReference type="GO" id="GO:0014069">
    <property type="term" value="C:postsynaptic density"/>
    <property type="evidence" value="ECO:0000314"/>
    <property type="project" value="MGI"/>
</dbReference>
<dbReference type="GO" id="GO:0032587">
    <property type="term" value="C:ruffle membrane"/>
    <property type="evidence" value="ECO:0000250"/>
    <property type="project" value="UniProtKB"/>
</dbReference>
<dbReference type="GO" id="GO:0003779">
    <property type="term" value="F:actin binding"/>
    <property type="evidence" value="ECO:0000314"/>
    <property type="project" value="MGI"/>
</dbReference>
<dbReference type="GO" id="GO:0051015">
    <property type="term" value="F:actin filament binding"/>
    <property type="evidence" value="ECO:0000250"/>
    <property type="project" value="UniProtKB"/>
</dbReference>
<dbReference type="GO" id="GO:0016887">
    <property type="term" value="F:ATP hydrolysis activity"/>
    <property type="evidence" value="ECO:0000314"/>
    <property type="project" value="UniProtKB"/>
</dbReference>
<dbReference type="GO" id="GO:0005509">
    <property type="term" value="F:calcium ion binding"/>
    <property type="evidence" value="ECO:0007669"/>
    <property type="project" value="InterPro"/>
</dbReference>
<dbReference type="GO" id="GO:0008017">
    <property type="term" value="F:microtubule binding"/>
    <property type="evidence" value="ECO:0000314"/>
    <property type="project" value="MGI"/>
</dbReference>
<dbReference type="GO" id="GO:0051011">
    <property type="term" value="F:microtubule minus-end binding"/>
    <property type="evidence" value="ECO:0000250"/>
    <property type="project" value="UniProtKB"/>
</dbReference>
<dbReference type="GO" id="GO:0016477">
    <property type="term" value="P:cell migration"/>
    <property type="evidence" value="ECO:0000315"/>
    <property type="project" value="MGI"/>
</dbReference>
<dbReference type="GO" id="GO:0007163">
    <property type="term" value="P:establishment or maintenance of cell polarity"/>
    <property type="evidence" value="ECO:0000315"/>
    <property type="project" value="MGI"/>
</dbReference>
<dbReference type="GO" id="GO:0043001">
    <property type="term" value="P:Golgi to plasma membrane protein transport"/>
    <property type="evidence" value="ECO:0000250"/>
    <property type="project" value="UniProtKB"/>
</dbReference>
<dbReference type="GO" id="GO:0045104">
    <property type="term" value="P:intermediate filament cytoskeleton organization"/>
    <property type="evidence" value="ECO:0007669"/>
    <property type="project" value="InterPro"/>
</dbReference>
<dbReference type="GO" id="GO:0001707">
    <property type="term" value="P:mesoderm formation"/>
    <property type="evidence" value="ECO:0000315"/>
    <property type="project" value="MGI"/>
</dbReference>
<dbReference type="GO" id="GO:0030177">
    <property type="term" value="P:positive regulation of Wnt signaling pathway"/>
    <property type="evidence" value="ECO:0000315"/>
    <property type="project" value="UniProtKB"/>
</dbReference>
<dbReference type="GO" id="GO:0006620">
    <property type="term" value="P:post-translational protein targeting to endoplasmic reticulum membrane"/>
    <property type="evidence" value="ECO:0000315"/>
    <property type="project" value="MGI"/>
</dbReference>
<dbReference type="GO" id="GO:0008104">
    <property type="term" value="P:protein localization"/>
    <property type="evidence" value="ECO:0000266"/>
    <property type="project" value="MGI"/>
</dbReference>
<dbReference type="GO" id="GO:0030334">
    <property type="term" value="P:regulation of cell migration"/>
    <property type="evidence" value="ECO:0000250"/>
    <property type="project" value="UniProtKB"/>
</dbReference>
<dbReference type="GO" id="GO:0010632">
    <property type="term" value="P:regulation of epithelial cell migration"/>
    <property type="evidence" value="ECO:0000315"/>
    <property type="project" value="UniProtKB"/>
</dbReference>
<dbReference type="GO" id="GO:0051893">
    <property type="term" value="P:regulation of focal adhesion assembly"/>
    <property type="evidence" value="ECO:0000315"/>
    <property type="project" value="UniProtKB"/>
</dbReference>
<dbReference type="GO" id="GO:0032886">
    <property type="term" value="P:regulation of microtubule-based process"/>
    <property type="evidence" value="ECO:0000315"/>
    <property type="project" value="UniProtKB"/>
</dbReference>
<dbReference type="GO" id="GO:0150011">
    <property type="term" value="P:regulation of neuron projection arborization"/>
    <property type="evidence" value="ECO:0000315"/>
    <property type="project" value="UniProtKB"/>
</dbReference>
<dbReference type="GO" id="GO:0016055">
    <property type="term" value="P:Wnt signaling pathway"/>
    <property type="evidence" value="ECO:0000315"/>
    <property type="project" value="MGI"/>
</dbReference>
<dbReference type="GO" id="GO:0042060">
    <property type="term" value="P:wound healing"/>
    <property type="evidence" value="ECO:0000315"/>
    <property type="project" value="UniProtKB"/>
</dbReference>
<dbReference type="CDD" id="cd21240">
    <property type="entry name" value="CH_MACF1_rpt2"/>
    <property type="match status" value="1"/>
</dbReference>
<dbReference type="CDD" id="cd21188">
    <property type="entry name" value="CH_PLEC-like_rpt1"/>
    <property type="match status" value="1"/>
</dbReference>
<dbReference type="CDD" id="cd00051">
    <property type="entry name" value="EFh"/>
    <property type="match status" value="1"/>
</dbReference>
<dbReference type="CDD" id="cd00176">
    <property type="entry name" value="SPEC"/>
    <property type="match status" value="14"/>
</dbReference>
<dbReference type="FunFam" id="1.20.58.60:FF:000009">
    <property type="entry name" value="dystonin isoform X1"/>
    <property type="match status" value="1"/>
</dbReference>
<dbReference type="FunFam" id="1.10.238.10:FF:000013">
    <property type="entry name" value="Microtubule-actin cross-linking factor 1"/>
    <property type="match status" value="1"/>
</dbReference>
<dbReference type="FunFam" id="1.10.418.10:FF:000002">
    <property type="entry name" value="Microtubule-actin cross-linking factor 1"/>
    <property type="match status" value="1"/>
</dbReference>
<dbReference type="FunFam" id="1.10.418.10:FF:000017">
    <property type="entry name" value="Microtubule-actin cross-linking factor 1"/>
    <property type="match status" value="1"/>
</dbReference>
<dbReference type="FunFam" id="1.20.58.60:FF:000001">
    <property type="entry name" value="Microtubule-actin cross-linking factor 1"/>
    <property type="match status" value="3"/>
</dbReference>
<dbReference type="FunFam" id="1.20.58.60:FF:000012">
    <property type="entry name" value="Microtubule-actin cross-linking factor 1"/>
    <property type="match status" value="1"/>
</dbReference>
<dbReference type="FunFam" id="1.20.58.60:FF:000016">
    <property type="entry name" value="Microtubule-actin cross-linking factor 1"/>
    <property type="match status" value="1"/>
</dbReference>
<dbReference type="FunFam" id="1.20.58.60:FF:000021">
    <property type="entry name" value="Microtubule-actin cross-linking factor 1"/>
    <property type="match status" value="1"/>
</dbReference>
<dbReference type="FunFam" id="1.20.58.60:FF:000022">
    <property type="entry name" value="Microtubule-actin cross-linking factor 1"/>
    <property type="match status" value="1"/>
</dbReference>
<dbReference type="FunFam" id="1.20.58.60:FF:000027">
    <property type="entry name" value="Microtubule-actin cross-linking factor 1"/>
    <property type="match status" value="1"/>
</dbReference>
<dbReference type="FunFam" id="1.20.58.60:FF:000031">
    <property type="entry name" value="Microtubule-actin cross-linking factor 1"/>
    <property type="match status" value="1"/>
</dbReference>
<dbReference type="FunFam" id="1.20.58.60:FF:000116">
    <property type="entry name" value="Microtubule-actin cross-linking factor 1"/>
    <property type="match status" value="1"/>
</dbReference>
<dbReference type="FunFam" id="2.30.30.40:FF:000011">
    <property type="entry name" value="Microtubule-actin cross-linking factor 1"/>
    <property type="match status" value="1"/>
</dbReference>
<dbReference type="FunFam" id="3.30.920.20:FF:000001">
    <property type="entry name" value="Microtubule-actin cross-linking factor 1"/>
    <property type="match status" value="1"/>
</dbReference>
<dbReference type="FunFam" id="3.90.1290.10:FF:000012">
    <property type="entry name" value="Microtubule-actin cross-linking factor 1"/>
    <property type="match status" value="1"/>
</dbReference>
<dbReference type="FunFam" id="3.90.1290.10:FF:000034">
    <property type="entry name" value="Microtubule-actin cross-linking factor 1"/>
    <property type="match status" value="1"/>
</dbReference>
<dbReference type="FunFam" id="1.20.58.60:FF:000008">
    <property type="entry name" value="microtubule-actin cross-linking factor 1"/>
    <property type="match status" value="1"/>
</dbReference>
<dbReference type="FunFam" id="1.20.58.60:FF:000014">
    <property type="entry name" value="microtubule-actin cross-linking factor 1"/>
    <property type="match status" value="1"/>
</dbReference>
<dbReference type="FunFam" id="1.20.58.60:FF:000025">
    <property type="entry name" value="microtubule-actin cross-linking factor 1"/>
    <property type="match status" value="1"/>
</dbReference>
<dbReference type="FunFam" id="3.90.1290.10:FF:000003">
    <property type="entry name" value="microtubule-actin cross-linking factor 1 isoform X1"/>
    <property type="match status" value="1"/>
</dbReference>
<dbReference type="FunFam" id="1.20.58.60:FF:000084">
    <property type="entry name" value="microtubule-actin cross-linking factor 1 isoform X2"/>
    <property type="match status" value="1"/>
</dbReference>
<dbReference type="FunFam" id="1.20.58.60:FF:000087">
    <property type="entry name" value="microtubule-actin cross-linking factor 1 isoform X2"/>
    <property type="match status" value="1"/>
</dbReference>
<dbReference type="FunFam" id="1.20.58.60:FF:000088">
    <property type="entry name" value="microtubule-actin cross-linking factor 1 isoform X2"/>
    <property type="match status" value="1"/>
</dbReference>
<dbReference type="FunFam" id="1.20.58.60:FF:000090">
    <property type="entry name" value="microtubule-actin cross-linking factor 1 isoform X2"/>
    <property type="match status" value="1"/>
</dbReference>
<dbReference type="FunFam" id="1.20.58.60:FF:000092">
    <property type="entry name" value="microtubule-actin cross-linking factor 1 isoform X2"/>
    <property type="match status" value="1"/>
</dbReference>
<dbReference type="FunFam" id="1.20.58.60:FF:000095">
    <property type="entry name" value="microtubule-actin cross-linking factor 1 isoform X2"/>
    <property type="match status" value="1"/>
</dbReference>
<dbReference type="FunFam" id="1.20.58.60:FF:000097">
    <property type="entry name" value="microtubule-actin cross-linking factor 1 isoform X2"/>
    <property type="match status" value="1"/>
</dbReference>
<dbReference type="FunFam" id="1.20.58.60:FF:000048">
    <property type="entry name" value="microtubule-actin cross-linking factor 1 isoform X3"/>
    <property type="match status" value="1"/>
</dbReference>
<dbReference type="FunFam" id="1.20.58.60:FF:000061">
    <property type="entry name" value="microtubule-actin cross-linking factor 1 isoform X3"/>
    <property type="match status" value="1"/>
</dbReference>
<dbReference type="FunFam" id="1.20.58.60:FF:000134">
    <property type="entry name" value="microtubule-actin cross-linking factor 1 isoform X4"/>
    <property type="match status" value="1"/>
</dbReference>
<dbReference type="FunFam" id="3.90.1290.10:FF:000004">
    <property type="entry name" value="microtubule-actin cross-linking factor 1 isoform X4"/>
    <property type="match status" value="1"/>
</dbReference>
<dbReference type="FunFam" id="1.20.58.60:FF:000234">
    <property type="entry name" value="microtubule-actin cross-linking factor 1 isoform X6"/>
    <property type="match status" value="1"/>
</dbReference>
<dbReference type="FunFam" id="3.90.1290.10:FF:000007">
    <property type="entry name" value="microtubule-actin cross-linking factor 1 isoform X6"/>
    <property type="match status" value="1"/>
</dbReference>
<dbReference type="FunFam" id="1.20.58.60:FF:000108">
    <property type="entry name" value="microtubule-actin cross-linking factor 1 isoform X8"/>
    <property type="match status" value="1"/>
</dbReference>
<dbReference type="FunFam" id="1.20.58.60:FF:000089">
    <property type="entry name" value="microtubule-actin cross-linking factor 1 isoform X9"/>
    <property type="match status" value="1"/>
</dbReference>
<dbReference type="FunFam" id="1.20.58.60:FF:000127">
    <property type="entry name" value="microtubule-actin cross-linking factor 1 isoform X9"/>
    <property type="match status" value="1"/>
</dbReference>
<dbReference type="FunFam" id="1.20.58.60:FF:000132">
    <property type="entry name" value="microtubule-actin cross-linking factor 1 isoform X9"/>
    <property type="match status" value="1"/>
</dbReference>
<dbReference type="FunFam" id="1.20.58.60:FF:000167">
    <property type="entry name" value="microtubule-actin cross-linking factor 1 isoform X9"/>
    <property type="match status" value="1"/>
</dbReference>
<dbReference type="FunFam" id="1.20.58.60:FF:000389">
    <property type="entry name" value="Microtubule-actin crosslinking factor 1"/>
    <property type="match status" value="1"/>
</dbReference>
<dbReference type="FunFam" id="1.20.58.60:FF:000010">
    <property type="entry name" value="plectin isoform X2"/>
    <property type="match status" value="1"/>
</dbReference>
<dbReference type="Gene3D" id="1.20.58.1060">
    <property type="match status" value="1"/>
</dbReference>
<dbReference type="Gene3D" id="1.20.58.60">
    <property type="match status" value="31"/>
</dbReference>
<dbReference type="Gene3D" id="1.10.418.10">
    <property type="entry name" value="Calponin-like domain"/>
    <property type="match status" value="2"/>
</dbReference>
<dbReference type="Gene3D" id="1.10.238.10">
    <property type="entry name" value="EF-hand"/>
    <property type="match status" value="1"/>
</dbReference>
<dbReference type="Gene3D" id="3.30.920.20">
    <property type="entry name" value="Gas2-like domain"/>
    <property type="match status" value="1"/>
</dbReference>
<dbReference type="Gene3D" id="3.90.1290.10">
    <property type="entry name" value="Plakin repeat"/>
    <property type="match status" value="5"/>
</dbReference>
<dbReference type="Gene3D" id="2.30.30.40">
    <property type="entry name" value="SH3 Domains"/>
    <property type="match status" value="1"/>
</dbReference>
<dbReference type="InterPro" id="IPR001589">
    <property type="entry name" value="Actinin_actin-bd_CS"/>
</dbReference>
<dbReference type="InterPro" id="IPR001715">
    <property type="entry name" value="CH_dom"/>
</dbReference>
<dbReference type="InterPro" id="IPR036872">
    <property type="entry name" value="CH_dom_sf"/>
</dbReference>
<dbReference type="InterPro" id="IPR041615">
    <property type="entry name" value="Desmoplakin_SH3"/>
</dbReference>
<dbReference type="InterPro" id="IPR041573">
    <property type="entry name" value="Desmoplakin_Spectrin-like"/>
</dbReference>
<dbReference type="InterPro" id="IPR011992">
    <property type="entry name" value="EF-hand-dom_pair"/>
</dbReference>
<dbReference type="InterPro" id="IPR018247">
    <property type="entry name" value="EF_Hand_1_Ca_BS"/>
</dbReference>
<dbReference type="InterPro" id="IPR002048">
    <property type="entry name" value="EF_hand_dom"/>
</dbReference>
<dbReference type="InterPro" id="IPR003108">
    <property type="entry name" value="GAR_dom"/>
</dbReference>
<dbReference type="InterPro" id="IPR036534">
    <property type="entry name" value="GAR_dom_sf"/>
</dbReference>
<dbReference type="InterPro" id="IPR049538">
    <property type="entry name" value="PCN-like_spectrin-like_rpt"/>
</dbReference>
<dbReference type="InterPro" id="IPR043197">
    <property type="entry name" value="Plakin"/>
</dbReference>
<dbReference type="InterPro" id="IPR035915">
    <property type="entry name" value="Plakin_repeat_sf"/>
</dbReference>
<dbReference type="InterPro" id="IPR001101">
    <property type="entry name" value="Plectin_repeat"/>
</dbReference>
<dbReference type="InterPro" id="IPR001452">
    <property type="entry name" value="SH3_domain"/>
</dbReference>
<dbReference type="InterPro" id="IPR018159">
    <property type="entry name" value="Spectrin/alpha-actinin"/>
</dbReference>
<dbReference type="InterPro" id="IPR002017">
    <property type="entry name" value="Spectrin_repeat"/>
</dbReference>
<dbReference type="PANTHER" id="PTHR23169">
    <property type="entry name" value="ENVOPLAKIN"/>
    <property type="match status" value="1"/>
</dbReference>
<dbReference type="PANTHER" id="PTHR23169:SF21">
    <property type="entry name" value="EPIPLAKIN"/>
    <property type="match status" value="1"/>
</dbReference>
<dbReference type="Pfam" id="PF00307">
    <property type="entry name" value="CH"/>
    <property type="match status" value="2"/>
</dbReference>
<dbReference type="Pfam" id="PF13499">
    <property type="entry name" value="EF-hand_7"/>
    <property type="match status" value="1"/>
</dbReference>
<dbReference type="Pfam" id="PF02187">
    <property type="entry name" value="GAS2"/>
    <property type="match status" value="1"/>
</dbReference>
<dbReference type="Pfam" id="PF00681">
    <property type="entry name" value="Plectin"/>
    <property type="match status" value="10"/>
</dbReference>
<dbReference type="Pfam" id="PF17902">
    <property type="entry name" value="SH3_10"/>
    <property type="match status" value="1"/>
</dbReference>
<dbReference type="Pfam" id="PF00435">
    <property type="entry name" value="Spectrin"/>
    <property type="match status" value="17"/>
</dbReference>
<dbReference type="Pfam" id="PF18373">
    <property type="entry name" value="Spectrin_2"/>
    <property type="match status" value="1"/>
</dbReference>
<dbReference type="Pfam" id="PF21019">
    <property type="entry name" value="Spectrin_3"/>
    <property type="match status" value="1"/>
</dbReference>
<dbReference type="Pfam" id="PF21020">
    <property type="entry name" value="Spectrin_4"/>
    <property type="match status" value="1"/>
</dbReference>
<dbReference type="Pfam" id="PF21097">
    <property type="entry name" value="SR_plectin_7"/>
    <property type="match status" value="1"/>
</dbReference>
<dbReference type="SMART" id="SM00033">
    <property type="entry name" value="CH"/>
    <property type="match status" value="2"/>
</dbReference>
<dbReference type="SMART" id="SM01129">
    <property type="entry name" value="DELLA"/>
    <property type="match status" value="1"/>
</dbReference>
<dbReference type="SMART" id="SM00054">
    <property type="entry name" value="EFh"/>
    <property type="match status" value="2"/>
</dbReference>
<dbReference type="SMART" id="SM00243">
    <property type="entry name" value="GAS2"/>
    <property type="match status" value="1"/>
</dbReference>
<dbReference type="SMART" id="SM00250">
    <property type="entry name" value="PLEC"/>
    <property type="match status" value="19"/>
</dbReference>
<dbReference type="SMART" id="SM00150">
    <property type="entry name" value="SPEC"/>
    <property type="match status" value="34"/>
</dbReference>
<dbReference type="SUPFAM" id="SSF47576">
    <property type="entry name" value="Calponin-homology domain, CH-domain"/>
    <property type="match status" value="1"/>
</dbReference>
<dbReference type="SUPFAM" id="SSF47473">
    <property type="entry name" value="EF-hand"/>
    <property type="match status" value="1"/>
</dbReference>
<dbReference type="SUPFAM" id="SSF143575">
    <property type="entry name" value="GAS2 domain-like"/>
    <property type="match status" value="1"/>
</dbReference>
<dbReference type="SUPFAM" id="SSF75399">
    <property type="entry name" value="Plakin repeat"/>
    <property type="match status" value="6"/>
</dbReference>
<dbReference type="SUPFAM" id="SSF46966">
    <property type="entry name" value="Spectrin repeat"/>
    <property type="match status" value="32"/>
</dbReference>
<dbReference type="PROSITE" id="PS00019">
    <property type="entry name" value="ACTININ_1"/>
    <property type="match status" value="1"/>
</dbReference>
<dbReference type="PROSITE" id="PS00020">
    <property type="entry name" value="ACTININ_2"/>
    <property type="match status" value="1"/>
</dbReference>
<dbReference type="PROSITE" id="PS50021">
    <property type="entry name" value="CH"/>
    <property type="match status" value="2"/>
</dbReference>
<dbReference type="PROSITE" id="PS00018">
    <property type="entry name" value="EF_HAND_1"/>
    <property type="match status" value="2"/>
</dbReference>
<dbReference type="PROSITE" id="PS50222">
    <property type="entry name" value="EF_HAND_2"/>
    <property type="match status" value="2"/>
</dbReference>
<dbReference type="PROSITE" id="PS51460">
    <property type="entry name" value="GAR"/>
    <property type="match status" value="1"/>
</dbReference>
<dbReference type="PROSITE" id="PS50002">
    <property type="entry name" value="SH3"/>
    <property type="match status" value="1"/>
</dbReference>
<accession>Q9QXZ0</accession>
<accession>B1ARU3</accession>
<accession>P97394</accession>
<accession>P97395</accession>
<accession>P97396</accession>
<accession>Q4PLL5</accession>
<feature type="chain" id="PRO_0000073451" description="Microtubule-actin cross-linking factor 1, isoforms 1/2/3/4">
    <location>
        <begin position="1"/>
        <end position="7354"/>
    </location>
</feature>
<feature type="domain" description="Calponin-homology (CH) 1" evidence="3">
    <location>
        <begin position="78"/>
        <end position="181"/>
    </location>
</feature>
<feature type="repeat" description="LRR 1">
    <location>
        <begin position="148"/>
        <end position="171"/>
    </location>
</feature>
<feature type="domain" description="Calponin-homology (CH) 2" evidence="3">
    <location>
        <begin position="194"/>
        <end position="298"/>
    </location>
</feature>
<feature type="repeat" description="LRR 3">
    <location>
        <begin position="377"/>
        <end position="399"/>
    </location>
</feature>
<feature type="repeat" description="LRR 4">
    <location>
        <begin position="441"/>
        <end position="464"/>
    </location>
</feature>
<feature type="domain" description="SH3" evidence="4">
    <location>
        <begin position="868"/>
        <end position="925"/>
    </location>
</feature>
<feature type="repeat" description="LRR 5">
    <location>
        <begin position="1050"/>
        <end position="1073"/>
    </location>
</feature>
<feature type="repeat" description="LRR 6">
    <location>
        <begin position="1128"/>
        <end position="1154"/>
    </location>
</feature>
<feature type="repeat" description="LRR 7">
    <location>
        <begin position="1187"/>
        <end position="1210"/>
    </location>
</feature>
<feature type="repeat" description="LRR 8">
    <location>
        <begin position="1257"/>
        <end position="1282"/>
    </location>
</feature>
<feature type="repeat" description="Plectin 1">
    <location>
        <begin position="1577"/>
        <end position="1619"/>
    </location>
</feature>
<feature type="repeat" description="Plectin 2">
    <location>
        <begin position="1654"/>
        <end position="1696"/>
    </location>
</feature>
<feature type="repeat" description="Plectin 3">
    <location>
        <begin position="1769"/>
        <end position="1809"/>
    </location>
</feature>
<feature type="repeat" description="Plectin 4">
    <location>
        <begin position="1811"/>
        <end position="1848"/>
    </location>
</feature>
<feature type="repeat" description="Plectin 5">
    <location>
        <begin position="1855"/>
        <end position="1885"/>
    </location>
</feature>
<feature type="repeat" description="Plectin 6">
    <location>
        <begin position="2276"/>
        <end position="2316"/>
    </location>
</feature>
<feature type="repeat" description="Plectin 7">
    <location>
        <begin position="2352"/>
        <end position="2393"/>
    </location>
</feature>
<feature type="repeat" description="Plectin 8">
    <location>
        <begin position="2394"/>
        <end position="2425"/>
    </location>
</feature>
<feature type="repeat" description="Plectin 9">
    <location>
        <begin position="2487"/>
        <end position="2528"/>
    </location>
</feature>
<feature type="repeat" description="Plectin 10">
    <location>
        <begin position="2671"/>
        <end position="2715"/>
    </location>
</feature>
<feature type="repeat" description="LRR 9">
    <location>
        <begin position="3225"/>
        <end position="3244"/>
    </location>
</feature>
<feature type="repeat" description="LRR 10">
    <location>
        <begin position="3606"/>
        <end position="3630"/>
    </location>
</feature>
<feature type="repeat" description="LRR 11">
    <location>
        <begin position="3657"/>
        <end position="3681"/>
    </location>
</feature>
<feature type="repeat" description="Spectrin 1">
    <location>
        <begin position="3845"/>
        <end position="3920"/>
    </location>
</feature>
<feature type="repeat" description="LRR 12">
    <location>
        <begin position="3898"/>
        <end position="3920"/>
    </location>
</feature>
<feature type="repeat" description="Spectrin 2">
    <location>
        <begin position="3962"/>
        <end position="4070"/>
    </location>
</feature>
<feature type="repeat" description="LRR 13">
    <location>
        <begin position="4087"/>
        <end position="4112"/>
    </location>
</feature>
<feature type="repeat" description="LRR 14">
    <location>
        <begin position="4223"/>
        <end position="4249"/>
    </location>
</feature>
<feature type="repeat" description="Spectrin 3">
    <location>
        <begin position="4428"/>
        <end position="4536"/>
    </location>
</feature>
<feature type="repeat" description="LRR 15">
    <location>
        <begin position="4473"/>
        <end position="4496"/>
    </location>
</feature>
<feature type="repeat" description="LRR 16">
    <location>
        <begin position="4563"/>
        <end position="4583"/>
    </location>
</feature>
<feature type="repeat" description="LRR 17">
    <location>
        <begin position="4728"/>
        <end position="4751"/>
    </location>
</feature>
<feature type="repeat" description="Spectrin 4">
    <location>
        <begin position="4759"/>
        <end position="4863"/>
    </location>
</feature>
<feature type="repeat" description="LRR 18">
    <location>
        <begin position="5010"/>
        <end position="5035"/>
    </location>
</feature>
<feature type="repeat" description="LRR 19">
    <location>
        <begin position="5131"/>
        <end position="5153"/>
    </location>
</feature>
<feature type="repeat" description="Spectrin 5">
    <location>
        <begin position="5195"/>
        <end position="5300"/>
    </location>
</feature>
<feature type="repeat" description="LRR 20">
    <location>
        <begin position="5240"/>
        <end position="5263"/>
    </location>
</feature>
<feature type="repeat" description="Spectrin 6">
    <location>
        <begin position="5307"/>
        <end position="5409"/>
    </location>
</feature>
<feature type="repeat" description="Spectrin 7">
    <location>
        <begin position="5414"/>
        <end position="5506"/>
    </location>
</feature>
<feature type="repeat" description="Spectrin 8">
    <location>
        <begin position="5631"/>
        <end position="5735"/>
    </location>
</feature>
<feature type="repeat" description="LRR 21">
    <location>
        <begin position="5654"/>
        <end position="5678"/>
    </location>
</feature>
<feature type="repeat" description="Spectrin 9">
    <location>
        <begin position="5742"/>
        <end position="5844"/>
    </location>
</feature>
<feature type="repeat" description="LRR 22">
    <location>
        <begin position="5763"/>
        <end position="5787"/>
    </location>
</feature>
<feature type="repeat" description="Spectrin 10">
    <location>
        <begin position="5961"/>
        <end position="6066"/>
    </location>
</feature>
<feature type="repeat" description="Spectrin 11">
    <location>
        <begin position="6071"/>
        <end position="6175"/>
    </location>
</feature>
<feature type="repeat" description="Spectrin 12">
    <location>
        <begin position="6181"/>
        <end position="6284"/>
    </location>
</feature>
<feature type="repeat" description="Spectrin 13">
    <location>
        <begin position="6289"/>
        <end position="6395"/>
    </location>
</feature>
<feature type="repeat" description="Spectrin 14">
    <location>
        <begin position="6400"/>
        <end position="6503"/>
    </location>
</feature>
<feature type="repeat" description="LRR 23">
    <location>
        <begin position="6452"/>
        <end position="6475"/>
    </location>
</feature>
<feature type="repeat" description="Spectrin 15">
    <location>
        <begin position="6508"/>
        <end position="6614"/>
    </location>
</feature>
<feature type="repeat" description="Spectrin 16">
    <location>
        <begin position="6621"/>
        <end position="6722"/>
    </location>
</feature>
<feature type="repeat" description="Spectrin 17">
    <location>
        <begin position="6726"/>
        <end position="6830"/>
    </location>
</feature>
<feature type="domain" description="EF-hand 1" evidence="5">
    <location>
        <begin position="7001"/>
        <end position="7036"/>
    </location>
</feature>
<feature type="domain" description="EF-hand 2" evidence="5">
    <location>
        <begin position="7037"/>
        <end position="7072"/>
    </location>
</feature>
<feature type="domain" description="GAR" evidence="6">
    <location>
        <begin position="7077"/>
        <end position="7155"/>
    </location>
</feature>
<feature type="region of interest" description="Actin-binding">
    <location>
        <begin position="1"/>
        <end position="295"/>
    </location>
</feature>
<feature type="region of interest" description="Disordered" evidence="7">
    <location>
        <begin position="1"/>
        <end position="47"/>
    </location>
</feature>
<feature type="region of interest" description="Disordered" evidence="7">
    <location>
        <begin position="2120"/>
        <end position="2155"/>
    </location>
</feature>
<feature type="region of interest" description="Disordered" evidence="7">
    <location>
        <begin position="2806"/>
        <end position="2841"/>
    </location>
</feature>
<feature type="region of interest" description="Disordered" evidence="7">
    <location>
        <begin position="2951"/>
        <end position="2978"/>
    </location>
</feature>
<feature type="region of interest" description="Disordered" evidence="7">
    <location>
        <begin position="3058"/>
        <end position="3099"/>
    </location>
</feature>
<feature type="region of interest" description="Disordered" evidence="7">
    <location>
        <begin position="6904"/>
        <end position="6937"/>
    </location>
</feature>
<feature type="region of interest" description="C-terminal tail">
    <location>
        <begin position="7077"/>
        <end position="7354"/>
    </location>
</feature>
<feature type="region of interest" description="Disordered" evidence="7">
    <location>
        <begin position="7171"/>
        <end position="7354"/>
    </location>
</feature>
<feature type="region of interest" description="4 X 4 AA tandem repeats of [GS]-S-R-[AR]">
    <location>
        <begin position="7279"/>
        <end position="7294"/>
    </location>
</feature>
<feature type="compositionally biased region" description="Basic and acidic residues" evidence="7">
    <location>
        <begin position="9"/>
        <end position="30"/>
    </location>
</feature>
<feature type="compositionally biased region" description="Basic and acidic residues" evidence="7">
    <location>
        <begin position="2120"/>
        <end position="2131"/>
    </location>
</feature>
<feature type="compositionally biased region" description="Basic and acidic residues" evidence="7">
    <location>
        <begin position="2145"/>
        <end position="2155"/>
    </location>
</feature>
<feature type="compositionally biased region" description="Basic and acidic residues" evidence="7">
    <location>
        <begin position="2812"/>
        <end position="2837"/>
    </location>
</feature>
<feature type="compositionally biased region" description="Acidic residues" evidence="7">
    <location>
        <begin position="2968"/>
        <end position="2978"/>
    </location>
</feature>
<feature type="compositionally biased region" description="Low complexity" evidence="7">
    <location>
        <begin position="7191"/>
        <end position="7225"/>
    </location>
</feature>
<feature type="compositionally biased region" description="Polar residues" evidence="7">
    <location>
        <begin position="7242"/>
        <end position="7261"/>
    </location>
</feature>
<feature type="compositionally biased region" description="Low complexity" evidence="7">
    <location>
        <begin position="7276"/>
        <end position="7290"/>
    </location>
</feature>
<feature type="compositionally biased region" description="Polar residues" evidence="7">
    <location>
        <begin position="7305"/>
        <end position="7315"/>
    </location>
</feature>
<feature type="compositionally biased region" description="Low complexity" evidence="7">
    <location>
        <begin position="7316"/>
        <end position="7327"/>
    </location>
</feature>
<feature type="binding site" evidence="5">
    <location>
        <position position="7014"/>
    </location>
    <ligand>
        <name>Ca(2+)</name>
        <dbReference type="ChEBI" id="CHEBI:29108"/>
        <label>1</label>
    </ligand>
</feature>
<feature type="binding site" evidence="5">
    <location>
        <position position="7016"/>
    </location>
    <ligand>
        <name>Ca(2+)</name>
        <dbReference type="ChEBI" id="CHEBI:29108"/>
        <label>1</label>
    </ligand>
</feature>
<feature type="binding site" evidence="5">
    <location>
        <position position="7018"/>
    </location>
    <ligand>
        <name>Ca(2+)</name>
        <dbReference type="ChEBI" id="CHEBI:29108"/>
        <label>1</label>
    </ligand>
</feature>
<feature type="binding site" evidence="5">
    <location>
        <position position="7020"/>
    </location>
    <ligand>
        <name>Ca(2+)</name>
        <dbReference type="ChEBI" id="CHEBI:29108"/>
        <label>1</label>
    </ligand>
</feature>
<feature type="binding site" evidence="5">
    <location>
        <position position="7025"/>
    </location>
    <ligand>
        <name>Ca(2+)</name>
        <dbReference type="ChEBI" id="CHEBI:29108"/>
        <label>1</label>
    </ligand>
</feature>
<feature type="binding site" evidence="5">
    <location>
        <position position="7050"/>
    </location>
    <ligand>
        <name>Ca(2+)</name>
        <dbReference type="ChEBI" id="CHEBI:29108"/>
        <label>2</label>
    </ligand>
</feature>
<feature type="binding site" evidence="5">
    <location>
        <position position="7052"/>
    </location>
    <ligand>
        <name>Ca(2+)</name>
        <dbReference type="ChEBI" id="CHEBI:29108"/>
        <label>2</label>
    </ligand>
</feature>
<feature type="binding site" evidence="5">
    <location>
        <position position="7054"/>
    </location>
    <ligand>
        <name>Ca(2+)</name>
        <dbReference type="ChEBI" id="CHEBI:29108"/>
        <label>2</label>
    </ligand>
</feature>
<feature type="binding site" evidence="5">
    <location>
        <position position="7056"/>
    </location>
    <ligand>
        <name>Ca(2+)</name>
        <dbReference type="ChEBI" id="CHEBI:29108"/>
        <label>2</label>
    </ligand>
</feature>
<feature type="binding site" evidence="5">
    <location>
        <position position="7061"/>
    </location>
    <ligand>
        <name>Ca(2+)</name>
        <dbReference type="ChEBI" id="CHEBI:29108"/>
        <label>2</label>
    </ligand>
</feature>
<feature type="modified residue" description="Phosphoserine" evidence="1">
    <location>
        <position position="4"/>
    </location>
</feature>
<feature type="modified residue" description="Phosphoserine" evidence="20">
    <location>
        <position position="35"/>
    </location>
</feature>
<feature type="modified residue" description="Phosphoserine" evidence="20">
    <location>
        <position position="57"/>
    </location>
</feature>
<feature type="modified residue" description="Phosphoserine" evidence="17 18 20">
    <location>
        <position position="280"/>
    </location>
</feature>
<feature type="modified residue" description="Phosphoserine" evidence="2">
    <location>
        <position position="1122"/>
    </location>
</feature>
<feature type="modified residue" description="Phosphoserine" evidence="2">
    <location>
        <position position="1367"/>
    </location>
</feature>
<feature type="modified residue" description="Phosphoserine" evidence="20">
    <location>
        <position position="1376"/>
    </location>
</feature>
<feature type="modified residue" description="Phosphoserine" evidence="2">
    <location>
        <position position="2051"/>
    </location>
</feature>
<feature type="modified residue" description="Phosphoserine" evidence="20">
    <location>
        <position position="2077"/>
    </location>
</feature>
<feature type="modified residue" description="Phosphoserine" evidence="20">
    <location>
        <position position="2081"/>
    </location>
</feature>
<feature type="modified residue" description="Phosphoserine" evidence="19 20">
    <location>
        <position position="3082"/>
    </location>
</feature>
<feature type="modified residue" description="Phosphoserine" evidence="19 20">
    <location>
        <position position="3085"/>
    </location>
</feature>
<feature type="modified residue" description="Phosphoserine" evidence="20">
    <location>
        <position position="3889"/>
    </location>
</feature>
<feature type="modified residue" description="Phosphoserine" evidence="20">
    <location>
        <position position="4458"/>
    </location>
</feature>
<feature type="modified residue" description="Phosphoserine" evidence="20">
    <location>
        <position position="4483"/>
    </location>
</feature>
<feature type="modified residue" description="Phosphoserine" evidence="2">
    <location>
        <position position="4921"/>
    </location>
</feature>
<feature type="modified residue" description="Phosphothreonine" evidence="20">
    <location>
        <position position="5394"/>
    </location>
</feature>
<feature type="modified residue" description="Phosphoserine" evidence="20">
    <location>
        <position position="5988"/>
    </location>
</feature>
<feature type="modified residue" description="N6-acetyllysine" evidence="2">
    <location>
        <position position="6166"/>
    </location>
</feature>
<feature type="modified residue" description="Phosphoserine" evidence="20">
    <location>
        <position position="6923"/>
    </location>
</feature>
<feature type="modified residue" description="Phosphothreonine" evidence="2">
    <location>
        <position position="7220"/>
    </location>
</feature>
<feature type="modified residue" description="Phosphoserine" evidence="2">
    <location>
        <position position="7245"/>
    </location>
</feature>
<feature type="modified residue" description="Phosphoserine" evidence="2">
    <location>
        <position position="7258"/>
    </location>
</feature>
<feature type="modified residue" description="Phosphoserine" evidence="19 20">
    <location>
        <position position="7296"/>
    </location>
</feature>
<feature type="modified residue" description="Phosphoserine" evidence="19 20">
    <location>
        <position position="7299"/>
    </location>
</feature>
<feature type="splice variant" id="VSP_041394" description="In isoform 4." evidence="14">
    <original>MSSSDEETLSERSCRSERSCRSERSYRSERSGSLSPCPPGDTLPWNLPLHEQKKRKSQDSVLDPAERAVVRVADERDRVQKKTFTKWVNKHLMKVRKHINDLYEDLRDGHNLISLLEVLSGIKLPREKGRMRFHRLQNVQIALDFLKQRQVKLVNIRNDDITDGNPKLTLGLIWTIILHFQ</original>
    <variation>MGNSLGCVKEPKESIAVPEKAPISPKKRVRFKRKWRGKKILTPEASHREEALEGTGVIEETETLTKLTARLPKEPGVGGAEHPPSDIFLPGDSAPNSGVGDQGMIVQVKESFQAEIQTAHLLLENESSVVGGAWDSLEEGMTVIAHLLDNPAERNCEKSVSQLVEFPRTASCSSRAVLLPLQGETAVEQGGTLLRHRHRSSTLPRTDYPSETVDQDQPSEGWSVGGRTKSVPSAPPTGSWIAKCSVASSIPKQSGDPIHTEPTHVGLVSCKGPIMPASQSDLSVSGITVSILPSSSGYGSDGLRLHGIRPEDTEPEKTSTPFSEEDGTLSLE</variation>
    <location>
        <begin position="1"/>
        <end position="181"/>
    </location>
</feature>
<feature type="splice variant" id="VSP_041395" description="In isoform 3." evidence="15">
    <original>MSSSDEETLSERSCRSERSCRSERSYRSERSGSLSPCPPGDTLPWNLPLHEQKKRKSQDSVLDPAERAVVRVA</original>
    <variation>EKEFVQAYEDVLERYK</variation>
    <location>
        <begin position="1"/>
        <end position="73"/>
    </location>
</feature>
<feature type="splice variant" id="VSP_041396" description="In isoform 2, isoform 3 and isoform 4." evidence="13 14">
    <location>
        <begin position="1543"/>
        <end position="3569"/>
    </location>
</feature>
<feature type="sequence conflict" description="In Ref. 1; AAD32244 and 4; AAC52988/AAC52989/AAC52990." evidence="15" ref="1 4">
    <original>D</original>
    <variation>N</variation>
    <location>
        <position position="242"/>
    </location>
</feature>
<feature type="sequence conflict" description="In Ref. 1; AAD32244, 2; AAY78553 and 4; AAC52988/AAC52989." evidence="15" ref="1 2 4">
    <original>P</original>
    <variation>L</variation>
    <location>
        <position position="393"/>
    </location>
</feature>
<feature type="sequence conflict" description="In Ref. 2; AAY78553." evidence="15" ref="2">
    <original>D</original>
    <variation>N</variation>
    <location>
        <position position="794"/>
    </location>
</feature>
<feature type="sequence conflict" description="In Ref. 1; AAD32244 and 4; AAC52988/AAC52989/AAC52990." evidence="15" ref="1 4">
    <original>C</original>
    <variation>A</variation>
    <location>
        <position position="815"/>
    </location>
</feature>
<feature type="sequence conflict" description="In Ref. 1; AAD32244 and 2; AAY78553." evidence="15" ref="1 2">
    <original>E</original>
    <variation>G</variation>
    <location>
        <position position="928"/>
    </location>
</feature>
<feature type="sequence conflict" description="In Ref. 1; AAD32244 and 2; AAY78553." evidence="15" ref="1 2">
    <original>V</original>
    <variation>A</variation>
    <location>
        <position position="3795"/>
    </location>
</feature>
<feature type="sequence conflict" description="In Ref. 4; AAC52988/AAC52989/AAC52990." evidence="15" ref="4">
    <original>Q</original>
    <variation>H</variation>
    <location>
        <position position="3909"/>
    </location>
</feature>
<feature type="sequence conflict" description="In Ref. 1; AAD32244 and 2; AAY78553." evidence="15" ref="1 2">
    <original>A</original>
    <variation>V</variation>
    <location>
        <position position="4735"/>
    </location>
</feature>
<feature type="sequence conflict" description="In Ref. 1; AAD32244 and 2; AAY78553." evidence="15" ref="1 2">
    <original>N</original>
    <variation>S</variation>
    <location>
        <position position="4750"/>
    </location>
</feature>
<feature type="sequence conflict" description="In Ref. 1; AAD32244 and 2; AAY78553." evidence="15" ref="1 2">
    <original>S</original>
    <variation>F</variation>
    <location>
        <position position="4891"/>
    </location>
</feature>
<feature type="sequence conflict" description="In Ref. 1; AAD32244 and 2; AAY78553." evidence="15" ref="1 2">
    <original>A</original>
    <variation>V</variation>
    <location>
        <position position="5587"/>
    </location>
</feature>
<feature type="sequence conflict" description="In Ref. 1; AAD32244 and 2; AAY78553." evidence="15" ref="1 2">
    <original>L</original>
    <variation>R</variation>
    <location>
        <position position="5603"/>
    </location>
</feature>
<feature type="sequence conflict" description="In Ref. 1; AAD32244 and 2; AAY78553." evidence="15" ref="1 2">
    <original>A</original>
    <variation>V</variation>
    <location>
        <position position="5971"/>
    </location>
</feature>
<feature type="sequence conflict" description="In Ref. 1; AAD32244 and 2; AAY78553." evidence="15" ref="1 2">
    <original>N</original>
    <variation>T</variation>
    <location>
        <position position="6309"/>
    </location>
</feature>
<feature type="modified residue" description="Phosphothreonine" evidence="20">
    <location sequence="Q9QXZ0-4">
        <position position="42"/>
    </location>
</feature>
<keyword id="KW-0007">Acetylation</keyword>
<keyword id="KW-0009">Actin-binding</keyword>
<keyword id="KW-0025">Alternative splicing</keyword>
<keyword id="KW-0106">Calcium</keyword>
<keyword id="KW-1003">Cell membrane</keyword>
<keyword id="KW-0966">Cell projection</keyword>
<keyword id="KW-0963">Cytoplasm</keyword>
<keyword id="KW-0206">Cytoskeleton</keyword>
<keyword id="KW-0903">Direct protein sequencing</keyword>
<keyword id="KW-0333">Golgi apparatus</keyword>
<keyword id="KW-0433">Leucine-rich repeat</keyword>
<keyword id="KW-0472">Membrane</keyword>
<keyword id="KW-0479">Metal-binding</keyword>
<keyword id="KW-0493">Microtubule</keyword>
<keyword id="KW-0597">Phosphoprotein</keyword>
<keyword id="KW-1185">Reference proteome</keyword>
<keyword id="KW-0677">Repeat</keyword>
<keyword id="KW-0728">SH3 domain</keyword>
<keyword id="KW-0879">Wnt signaling pathway</keyword>
<evidence type="ECO:0000250" key="1">
    <source>
        <dbReference type="UniProtKB" id="D3ZHV2"/>
    </source>
</evidence>
<evidence type="ECO:0000250" key="2">
    <source>
        <dbReference type="UniProtKB" id="Q9UPN3"/>
    </source>
</evidence>
<evidence type="ECO:0000255" key="3">
    <source>
        <dbReference type="PROSITE-ProRule" id="PRU00044"/>
    </source>
</evidence>
<evidence type="ECO:0000255" key="4">
    <source>
        <dbReference type="PROSITE-ProRule" id="PRU00192"/>
    </source>
</evidence>
<evidence type="ECO:0000255" key="5">
    <source>
        <dbReference type="PROSITE-ProRule" id="PRU00448"/>
    </source>
</evidence>
<evidence type="ECO:0000255" key="6">
    <source>
        <dbReference type="PROSITE-ProRule" id="PRU00792"/>
    </source>
</evidence>
<evidence type="ECO:0000256" key="7">
    <source>
        <dbReference type="SAM" id="MobiDB-lite"/>
    </source>
</evidence>
<evidence type="ECO:0000269" key="8">
    <source>
    </source>
</evidence>
<evidence type="ECO:0000269" key="9">
    <source>
    </source>
</evidence>
<evidence type="ECO:0000269" key="10">
    <source>
    </source>
</evidence>
<evidence type="ECO:0000269" key="11">
    <source>
    </source>
</evidence>
<evidence type="ECO:0000269" key="12">
    <source>
    </source>
</evidence>
<evidence type="ECO:0000303" key="13">
    <source>
    </source>
</evidence>
<evidence type="ECO:0000303" key="14">
    <source>
    </source>
</evidence>
<evidence type="ECO:0000305" key="15"/>
<evidence type="ECO:0000312" key="16">
    <source>
        <dbReference type="MGI" id="MGI:108559"/>
    </source>
</evidence>
<evidence type="ECO:0007744" key="17">
    <source>
    </source>
</evidence>
<evidence type="ECO:0007744" key="18">
    <source>
    </source>
</evidence>
<evidence type="ECO:0007744" key="19">
    <source>
    </source>
</evidence>
<evidence type="ECO:0007744" key="20">
    <source>
    </source>
</evidence>
<comment type="function">
    <molecule>Isoform 2</molecule>
    <text evidence="2 9 10 11 12">F-actin-binding protein which plays a role in cross-linking actin to other cytoskeletal proteins and also binds to microtubules (PubMed:16815997, PubMed:18854161, PubMed:21295697). Plays an important role in ERBB2-dependent stabilization of microtubules at the cell cortex (By similarity). Acts as a positive regulator of Wnt receptor signaling pathway and is involved in the translocation of AXIN1 and its associated complex (composed of APC, CTNNB1 and GSK3B) from the cytoplasm to the cell membrane (PubMed:16815997). Has actin-regulated ATPase activity and is essential for controlling focal adhesions (FAs) assembly and dynamics (PubMed:18854161). Interaction with CAMSAP3 at the minus ends of non-centrosomal microtubules tethers microtubules minus-ends to actin filaments, regulating focal adhesion size and cell migration (By similarity). May play role in delivery of transport vesicles containing GPI-linked proteins from the trans-Golgi network through its interaction with GOLGA4 (By similarity). Plays a key role in wound healing and epidermal cell migration (PubMed:21295697). Required for efficient upward migration of bulge cells in response to wounding and this function is primarily rooted in its ability to coordinate microtubule dynamics and polarize hair follicle stem cells (PubMed:21295697). As a regulator of actin and microtubule arrangement and stabilization, it plays an essential role in neurite outgrowth, branching and spine formation during brain development (PubMed:26526844).</text>
</comment>
<comment type="subunit">
    <molecule>Isoform 2</molecule>
    <text evidence="2 10">Interacts with AXIN1, LRP6 and GOLGA4 (By similarity). Found in a complex composed of MACF1, APC, AXIN1, CTNNB1 and GSK3B (By similarity). Interacts with MAPRE1, CLASP1 and CLASP2 (PubMed:18854161). Interacts with CAMSAP3.</text>
</comment>
<comment type="subcellular location">
    <molecule>Isoform 2</molecule>
    <subcellularLocation>
        <location evidence="10 11">Cytoplasm</location>
    </subcellularLocation>
    <subcellularLocation>
        <location evidence="10 11">Cytoplasm</location>
        <location evidence="10 11">Cytoskeleton</location>
    </subcellularLocation>
    <subcellularLocation>
        <location evidence="2">Golgi apparatus</location>
    </subcellularLocation>
    <subcellularLocation>
        <location evidence="2">Cell membrane</location>
    </subcellularLocation>
    <subcellularLocation>
        <location evidence="2">Cell projection</location>
        <location evidence="2">Ruffle membrane</location>
    </subcellularLocation>
    <text evidence="2">APC controls its localization to the cell membrane which is critical for its function in microtubule stabilization. Localizes to the tips of microtubules. Associated with the minus-end of microtubules via interaction with CAMSAP3. The phosphorylated form is found in the cytoplasm while the non-phosphorylated form associates with the microtubules.</text>
</comment>
<comment type="subcellular location">
    <molecule>Isoform 1</molecule>
    <subcellularLocation>
        <location evidence="2">Cytoplasm</location>
    </subcellularLocation>
    <subcellularLocation>
        <location evidence="2">Golgi apparatus</location>
    </subcellularLocation>
</comment>
<comment type="alternative products">
    <event type="alternative splicing"/>
    <isoform>
        <id>Q9QXZ0-1</id>
        <name>1</name>
        <name>Macf1b</name>
        <sequence type="displayed"/>
    </isoform>
    <isoform>
        <id>Q9QXZ0-2</id>
        <name>2</name>
        <name>Macf1a</name>
        <sequence type="described" ref="VSP_041396"/>
    </isoform>
    <isoform>
        <id>Q9QXZ0-3</id>
        <name>3</name>
        <sequence type="described" ref="VSP_041395 VSP_041396"/>
    </isoform>
    <isoform>
        <id>Q9QXZ0-4</id>
        <name>4</name>
        <sequence type="described" ref="VSP_041394 VSP_041396"/>
    </isoform>
    <isoform>
        <id>Q69ZZ9-2</id>
        <name>6</name>
        <sequence type="external"/>
    </isoform>
    <isoform>
        <id>Q69ZZ9-1</id>
        <name>7</name>
        <sequence type="external"/>
    </isoform>
</comment>
<comment type="tissue specificity">
    <text evidence="8 9 11">Enriched in the hair follicle stem cells (at protein level). Isoform 1 and isoform 2 are ubiquitous expressed, with higher levels seen in lung, heart, thymus, spleen and brain.</text>
</comment>
<comment type="developmental stage">
    <text evidence="9">Isoform 2 is highly expressed in neuronal tissues and the foregut of 8.5 dpc embryos and the head fold and primitive streak of 7.5 dpc embryos (at protein level). Isoform 1: Expressed throughout the development of the embryo.</text>
</comment>
<comment type="domain">
    <text evidence="11">The C-terminal tail is required for phosphorylation by GSK3B and for microtubule-binding.</text>
</comment>
<comment type="PTM">
    <text evidence="11">Phosphorylated on serine residues in the C-terminal tail by GSK3B. Phosphorylation inhibits microtubule-binding and this plays a critical role in bulge stem cell migration and skin wound repair. Wnt-signaling can repress phosphorylation.</text>
</comment>
<comment type="disruption phenotype">
    <text evidence="9 12">Mice die at the gastrulation stage and display developmental retardation at 7.5 dpc with defects in the formation of the primitive streak, node, and mesoderm. Conditional knockdown results in markedly decreased dendritic branching of cortical and hippocampal pyramidal neurons, reduced density and aberrant morphology of dendritic spines, and impaired elongation of callosal axons in the brain (PubMed:26526844).</text>
</comment>
<comment type="miscellaneous">
    <molecule>Isoform 3</molecule>
    <text evidence="15">Incomplete sequence.</text>
</comment>
<comment type="similarity">
    <text evidence="15">Belongs to the plakin or cytolinker family.</text>
</comment>
<comment type="sequence caution" evidence="15">
    <conflict type="erroneous initiation">
        <sequence resource="EMBL-CDS" id="AAC52989"/>
    </conflict>
    <text>Extended N-terminus.</text>
</comment>
<comment type="sequence caution" evidence="15">
    <conflict type="erroneous gene model prediction">
        <sequence resource="EMBL-CDS" id="CAM18553"/>
    </conflict>
</comment>
<comment type="sequence caution" evidence="15">
    <conflict type="erroneous gene model prediction">
        <sequence resource="EMBL-CDS" id="CAM20969"/>
    </conflict>
</comment>
<sequence>MSSSDEETLSERSCRSERSCRSERSYRSERSGSLSPCPPGDTLPWNLPLHEQKKRKSQDSVLDPAERAVVRVADERDRVQKKTFTKWVNKHLMKVRKHINDLYEDLRDGHNLISLLEVLSGIKLPREKGRMRFHRLQNVQIALDFLKQRQVKLVNIRNDDITDGNPKLTLGLIWTIILHFQISDIYISGESGDMSAKEKLLLWTQKVTAGYTGVKCTNFSSCWSDGKMFNALIHRYRPDLVDMERVQVQSNRENLEQAFEVAERLGVTRLLDAEDVDVPSPDEKSVITYVSSIYDAFPKVPEGGEGISATEVDSRWQEYQSRVDSLIPWIRQHTILMSDKSFPQNPVELKALYNQYIHFKETEILAKEREKGRIKELYKLLEVWIEFGRIKLPQGYHPNHVEEEWGKLIVEMLEREKSLRPAVERLELLLQIANKIQNGALNCEEKLTLAKNTLQADAAHLESGQPVQCESDVIMYIQECEGLIRQLQVDLQILRDEKYYQLEELAFRVMRLQDELVTLRLECTNLYRKGHFSSLELVPPSTLTTTHLKAEPLNKTTHSSSTSWFRKPMTRTELVSISSSEDEGNLRFVYELLSWVEEMQMKLERAEWGNDLPSVELQLETQQHIHTSVEELGSSVKEARLYEGKMSQNFHTSYVETLGKLETQYCKLKETSSFRMRHLQSLHKFVSRATAELIWLNGKEEEELACDWSDSNPNISAKKTYFSELTMELEGKQDVFRSLQDTAEVLSLENHPAKQTVEAYSAAVQSQLQWMKQLCLCVEQHVKENAAYFQFFSDARDLESFLRNLQDSIKRKYTCDRSTSLSRLEDLLQDSMDEKEQLIQSKSSVASLVGRSKTIVQLKPRNPDHVLKSTLSVKAICDYRQIEITICKNDECVLEDNSQRTKWKVISPTGNEAMVPSVCFLIPPPNKEAIEMASRVEQSYQKVMALWHQLHINTKSLISWNYLRKDLDTVQTWSLEKLRSLAPGECHQVMKNLQAHYEDFLQDSHDSALFSVADRLRIEEEVEACKAHFQHLMKSLENEDKEETLAKVYISELKNIRLLLEECEQRLLKQIQSPASSKTDRDARQDITLRIAEQEHTQEDLQHLRSDLDAISMKCNVFLQQSPSGSSATTLRSELNLMVEKMDHVYGLSTVYLNKLKTIDVIVRSMQDAELLVKGYEIKLSQEEAVPADLSALESHRTTLQHWLSDVKDKNSVFSVLDEEITKAKKVAEQLRHPASEPNLDLERYQEKGSQLQERWHRVIAQLETRQSEVESIQEVLRDYRACHGTLIKWIEETTAQQEMMKPGQAEDSRVLSEQLSQQTELFAEIERNQTKLDQCQKFSQQYSTIVKDYELQLMTYKAFVESQQKSPGKRRRMISSSDAITQEFMDLRTRYTALVTLTTQHVKYISDALRRLEEEEKVVEEEKQEHVEKVKDLLGWVSTLARNTQGTTTSSHTSASADIEKAILEQQVLAEELTTKKEQVSEAIKTSQIFLAKHGHKLSEGEKEQISEQLRVLNKTYHDLCDGSANQLQQLQSELAQQTEQKGCRAVAGVIDLGTVEIFPIFRAMQKGLIDQDTGLVLLESQIIMSGLIDPENSEKLSLEEGLTRNFINLPIYQQLLGLRDSLSLVSRLTGTLGSLSVVEAIEKKIISERLGLKVLEVHLATGGFSLPPSENCINLEEAFHQGFIASSLHSELQSHLRSSKNLIDPNTAEKVGLLDLMQRCIIHQESGLKLLPVKQLAGGMVSLKSGRKVSIFRAVQEGLIDRQVTVRLLEAQLFAGGIVDPRTGHRLTVEEAVRHNLIDQDMACAILIRQLQTGGIIDTVTGDRMTIDEAVTNNLVAAKIALVILESLWSFMGLLLPESGEILPITDALEQGIVSTELAHKILHNRQQIEALFLPTLTEIWSWEKATESGILDKDLVNNLRSVCIPDMMPHIQLADSAEQSKVGFAAGKPPVSGPREEGSSHGEKLLFQLMTHSYIHAHTGQRLLLLDQELVEMLTSRDDCQVILPEVFEIQHQRLNTSEALQELYTGTISQISSAKHPRKPCESQFLSQNKDYPSQENCTEAKGERSVVGIECSPAESPERELFLKEQEAIIENVGSLKVINKVKLKLQRPLLGSRKEEQAETLREENISGDPLLVECPEESEGKDLSTEKSKCQTPTKCSFTCHKEQVKTIKDIPSETGTSLIKSQNQMSQFQVDTSVGLRSEFKSEHDMNVNSLEKELKEELLVKDGHKQSQEGQSVADGQTVALEKTDTEDNADEPALLHSSPFEDATLSTLSAQLQDGGIFNEETGQKLLLNEAIAQGLVSSHTAVKLMGKLNMFRGFFDSQTCESLTTEEVIDEGLMDEKLLYNVLMSDKAISGILDPRTHSLCSVKEAVAAGLLDKETATRILEGQVITGGIVDLKRGKKLSVTLASNLGLVDTADQTELINLEKATKGRGAEKAVKERLIELQMETAGLMDPESKAPLTVLQSIDRGILEREAAVYLLTKQVLDGGIIHHISGLRLSVDNAFKHGLIGEDMARQLRKVENFIHYQFFHPQTKEALSFSEAIKLDLVSPDLKREIQEIQDFSGNLGDFIYGQKLTLAKTNKEESLANKTELPSGVMHGVIDPENCTIIPYSELVKKCRIDTESGWRYLEVIPFSDIKDEAGNNVLTPPEAIQLGKVDFASALKVLEAQANTGGIIDMATGKRVTLASALEKKLLDENMARIIASHQMLSGGIIDIYSDQRVTLNDAVEKRLISPELAAMIQVDPLAEQGGTGVCELKGDFLRKELLSESSKTPRESYSKEKHEAVLQAGSLCAPEKAGIRGSNGEKAEKGRKISVEMEGQRQDEKASSDSKVSASILSPFGFEGESSYQVSVTHPCSESCDLKPREETRSCMKKCAVVERDKVVTQIKMVSHVKQSTSGLDAEEARERQGRMVSKEQGSHYETAGNLLSERSVRVDRRVRREMGGEQSVQMSREAAVLSEEESDQEVTIGDEPDSFVKSQSMKMIGNDKGKEAGIEKDISVVCKIEGFPSQMTSKDASLTNQDALPFYTEGETKTVNLCSILKPGEKLSQETASTVQKEPLSSEIPRPERLNSQESDEEPQISDVPHISKGDMAAQITTRQETTDVQDLYITSKSSETKDKIFPSKNYIEKLHQEIPMDPTRSHKLKEATISTLETEGISYLDSSDIKSLCEDSKADHKSCGHQKSKVTTTQAKKSLEVVDLLVRDTEEGSSEDRVGQRGPRVLASLLPEKLPTRTVQSENIRQHDAVIPAISEIREEMALSLPCSVVKVDGKIPKEKHKEILGDEQGPFMAIPSGKGIEGVNPEPCRATQNVFTRRLCLEHDEKLVSYLSLLRDIEMRTKQIQPLELNVAELQDLLGQAKELDRELKDLSTVVSQELECVDRIVISQPQEVPAQLLKALEKDAKNLQKSLDSVSDSWSSRFLHLQSAVEVKKATVLNRHKELQGKLQDLRAWVGRASLTLNSKGCDTETDADSLSHTLQPYKDMKQSMAERKSQLDALALDIQLFISEHPQDLSLQQNQEMLQFLSELQRSFQGLVEHTAAQKDVVQGHLQQVQQEVQVKTLQKQQDTCHKKLEDLCNWVGQAERALERHQGGSSSGKSSLLCAEPKVDLKDLQGDIQSHSTSFATAVKDIEGFLEENQTKLSPQELTALREKLHQAKEQYEVLQERTRVAQKELEEAVTSALQQETEKSKAATELAENKRKIDALLDWVGLLWGHLRESHRLAFQEWSSSLELAMEKQTLAATDGHVDVNQVPETLDRQYELMKARHQELLSQQQNFIVATQSVQSFLDQHSHNLTPEERQKLQEKLGELKEQYAASLARSEAELKQTQALRDELQKFLQDHKEFENWLQQSENELDSMHKGGSSPEALNSLLKRQGSFSEDVISHKGDLRFVTISGQKVLETENNFEEGQEPSATRNLVNEKLKDATERYTTLHSKCIRLGSHLSMLLGQYQQFQSSADSLQAWVLTCEASVGKLLSDTVASDPGVLQQQLATTKQLQEELAEHQVPVEKLQKAAHDLLDIEGEPALDCRPIQETTDSISSRFQNLSCSLDERSALLQKAIAQSQSVQESMESLLQSIREVEQNLERDQVASLSSGVIQEALANNMKLKQDIARQKSSLEATHDMVTRFMETADSNSASVLQGKLAELSQRFQQLQLQQQEKESNLKKLLPQAEMFEQLSNKLQQFMENKSRLLASGNQPDQDIAHFSQQIQELTLAMEDQKENLDTLEHLVTTLGSCGFALDLSQHQDKIQNLKKDFTELQKTVQEREKDASTCQEQLDEFRKLIRTFQKWLKETEGNVPPAKTFVSAKELEKQIEHLKDLISDWESKGALLGEINAKGTALESLIMDITAPDSQAKTGSILPPVGSSVGSVNGYHTCKDLTEIQCDMFDVNSKYEKLWEVLRERQESLQTVFSRMEEVQKEASSVLQWLESKEEVLKAMDATLSPTKTETVKAQAESNKAFLAELEQNSPKIQKVKEALAGLLKTYPNSQEAENWKKMQEDLNSRWEKATEVTVARQKQLEESASHLACFQAAESQLRPWLMEKELMMGVLGPLSIDPNMLKQQVQFMLKEFEARRQQHEQLNEAAQGILTGPGDMSPSASQVHKDLQSISQKWVELTDKLNSRSSQIDQAIVKSTQYQDLLQDLSEKVKAIGQRLSGQSAISTQPEAVKQQLEETSEIRSDLGQLDNEIKEAQTLCQELSLLIGEQYLKDELKKRLETVALPLQGLEDLAADRMNRLQAALASTQQFQQMFDELRTWLDEKQSQQAKNCPISAKLERLQCQLQENEEFQKNLNQHSGSYEVIVAEGEALLLSVPPGEEKKTLQNQLVELRSHWEDLSKKTANRQSRLKDCMQKAQKYQGHVEDLVPWIDECKSKMSELQVTLDPVQLESSLLRSKAMLNEAEKRRSLLEILNSAADILINSSEIDEDEIRDEKAGLNQNMDAITEELQAKTSSLEEMTQRLKEFQESFKNIEKKVEGAKHQLEIFDALGSQACSNKNLEKLKAQQEVLQALEPQVDYLRNFTQGLVEDAPDGSDASPLVHQAEVAQQEFLEVKQRVSSSCLTMENKLEGIGQFHCRVREMFSQLADLDDELDGMGAIGRDTDSLQSQIEDVRLFLNKIQALRFDIEDSEAECRKMLEEEGTLDLLGLKRELEALNKQCGKLTERGKVRQEQLELTLGRVEDFYRKLKALNDAATAAEEGEALQWIVGTEVDVINQQLADFKLFQKDQVDPLQVKLQQVNGLGQGLIQSAGKNCDVQGLEHDMDEINTRWNTLNKKVAQRIAQLQEALLHCGKFQDALEPLLSWLTDTEELIANQKPPSAEYKVVKAQIQEQKLLQRLLDDRKATVDMLQAEGGRIAQSAELADREKITGQLESLERRWTDLLSKAAARQKQLEDILVLAKQFHETAEPISDFLSVTANKLANSEPVGTQTAKIHQQIIRHKALNEEIINRKKNVDQAIKNGQALLKQTTGEEVLLIQEKLDGIKTRYADITLTSSKALRTLEQARQLATKFHSTYEELTGWLREAEEELAASGGQSPTGEQIPQFQQRQKELKKEVMEHRLVLDTVNEVSHALLELVPWRAREGLDKLVSDANEQYKLISDTVGQRVDEIDAAIQRSQQYEQAADAELAWVAETKRKLMALGPIRLEQDQTTAQLQVQKAFSIDIIRHKDSMDELFSHRGEIFSTCGEEQKAVLQEKTECLIQQYEAVSLLNSERYARLERAQVLVNQFWETYEELSPWAEETLALIAQLPPPAVDHEQLRQQQEEMRQLRESIAEHKPHIDKILKIGPQLKELNPEEGKMVEEKYQKAENMYAQIKDEVRQRALALDEAVSQSAQFHDKIEPMLETLENLSSRLRMPPLIPAEVDKIRECISDNKSATVELEKLQPSFEALKRRGEELIGRSQGADKDLAAKEIQDKLDQMVFFWEDIKARSEEREIKFLDVLELAEKFWYDMAALLTTIKDTQDIVHDLESPGIDPSIIKQQVEAAETIKEETDGLHEELEFIRILGADLIFACGETEKPEVKKSIDEMNNAWENLNKTWKERLEKLEDAMQAAVQYQDTLQAMFDWLDNTVIKLCTMPPVGTDLNTVKDQLNEMKEFKVEVYQQQIEMEKLNHQGELMLKKATDETDRDIIREPLTELKHLWENLGEKIAHRQHKLEGALLALGQFQHALEELMSWLTHTEELLDAQRPISGDPKVIEVELAKHHVLKNDVLAHQATVATVNKAGSELLESSAGDDASSLRSRLETMNQCWESVLQKTEEREQQLQSTLQQAQGFHSEIEDFLLELNRMENQLSASKPTGGLPETAREQLDTHMELHSQLRAKEEIYNQLLDKGRLMLLSRGDSGSGSKTEQSVALLEQKWHAVSSKVEERKSKLEEALSLATEFQNSLQEFINWLTLAEQSLNIASPPSLILNTVLSQIEEHKVFANEVNDHRDQIIELDQTGNQLKFLSQKQDVVLIKNLLVSVQSRWEKVVQRSIERGRSLDDARKRAKQFHEAWKKLIDWLEDAESHLDSELEISNDPDKIKLQLSKHKEFQKTLGGKQPVYDTTIRTGRALKEKTLLAGDTQKLDNLLGEVRDKWDTVCGKSVERQHKLEEALLFSGQFMDALQALVDWLYKVEPQLAEDQPVHGDLDLVMNLMDAHKVFQKELGKRTGTVQVLKRSGRELIEGSRDDTTWVKGQLQELSTRWDTVCKLSVSKQSRLEQALKQAEEFRDTVHMLLEWLSEAEQTLRFRGALPDDTEALQSLIDTHKEFMKKVEEKRVDVNTAVAMGEAILAVCHPDCITTIKHWITIIRARFEEVLTWAKQHQQRLETALSELVANAELLEELLAWIQWAETTLIQRDQEPIPQNIDRVKALITEHQSFMEEMTRKQPDVDRVTKTYKRKSVEPTHAPFMEKSRSGSRKSLNQPTPPPMPILSQSEAKNPRINQLSARWQQVWLLALERQRKLNDALDRLEELCPELKEFANFDFDVWRKKYMRWMNHKKSRVMDFFRRIDKDQDGKITRQEFIDGILASKFPTTKLEMTAVADIFDRDGDGYIDYYEFVAALHPNKDAYRPTTDADKIEDEVTRQVAQCKCAKRFQVEQIGENKYRFFLGNQFGDSQQLRLVRILRSTVMVRVGGGWMALDEFLVKNDPCRARGRTNIELREKFILPEGASQGMTPFRSRGRRSKPSSRAASPTRSSSSASQSNHSCTSMPSSPATPASGTKVISSSGSKLKRPTPAFHSSRTSLAGDTSNSSSPASTGAKANRADPKKSASRPGSRAGSRAGSRASSRRGSDASDFDLLETQSACSDTSESSAAGGQGSSRRGLTKPSKIPTMSKKTTTASPRTPGPKR</sequence>
<name>MACF1_MOUSE</name>
<organism>
    <name type="scientific">Mus musculus</name>
    <name type="common">Mouse</name>
    <dbReference type="NCBI Taxonomy" id="10090"/>
    <lineage>
        <taxon>Eukaryota</taxon>
        <taxon>Metazoa</taxon>
        <taxon>Chordata</taxon>
        <taxon>Craniata</taxon>
        <taxon>Vertebrata</taxon>
        <taxon>Euteleostomi</taxon>
        <taxon>Mammalia</taxon>
        <taxon>Eutheria</taxon>
        <taxon>Euarchontoglires</taxon>
        <taxon>Glires</taxon>
        <taxon>Rodentia</taxon>
        <taxon>Myomorpha</taxon>
        <taxon>Muroidea</taxon>
        <taxon>Muridae</taxon>
        <taxon>Murinae</taxon>
        <taxon>Mus</taxon>
        <taxon>Mus</taxon>
    </lineage>
</organism>
<reference key="1">
    <citation type="journal article" date="1999" name="J. Cell Biol.">
        <title>Microtubule actin cross-linking factor (MACF): a hybrid of dystonin and dystrophin that can interact with the actin and microtubule cytoskeletons.</title>
        <authorList>
            <person name="Leung C.L."/>
            <person name="Sun D."/>
            <person name="Zheng M."/>
            <person name="Knowles D.R."/>
            <person name="Liem R.K.H."/>
        </authorList>
    </citation>
    <scope>NUCLEOTIDE SEQUENCE [MRNA] (ISOFORM 2)</scope>
    <source>
        <strain>BALB/cJ</strain>
    </source>
</reference>
<reference key="2">
    <citation type="journal article" date="2005" name="J. Cell Sci.">
        <title>Microtubule actin crosslinking factor 1b: a novel plakin that localizes to the Golgi complex.</title>
        <authorList>
            <person name="Lin C.-M."/>
            <person name="Chen H.-J."/>
            <person name="Leung C.L."/>
            <person name="Parry D.A.D."/>
            <person name="Liem R.K.H."/>
        </authorList>
    </citation>
    <scope>NUCLEOTIDE SEQUENCE [MRNA] (ISOFORM 1)</scope>
    <scope>TISSUE SPECIFICITY</scope>
    <source>
        <strain>BALB/cJ</strain>
    </source>
</reference>
<reference key="3">
    <citation type="journal article" date="2009" name="PLoS Biol.">
        <title>Lineage-specific biology revealed by a finished genome assembly of the mouse.</title>
        <authorList>
            <person name="Church D.M."/>
            <person name="Goodstadt L."/>
            <person name="Hillier L.W."/>
            <person name="Zody M.C."/>
            <person name="Goldstein S."/>
            <person name="She X."/>
            <person name="Bult C.J."/>
            <person name="Agarwala R."/>
            <person name="Cherry J.L."/>
            <person name="DiCuccio M."/>
            <person name="Hlavina W."/>
            <person name="Kapustin Y."/>
            <person name="Meric P."/>
            <person name="Maglott D."/>
            <person name="Birtle Z."/>
            <person name="Marques A.C."/>
            <person name="Graves T."/>
            <person name="Zhou S."/>
            <person name="Teague B."/>
            <person name="Potamousis K."/>
            <person name="Churas C."/>
            <person name="Place M."/>
            <person name="Herschleb J."/>
            <person name="Runnheim R."/>
            <person name="Forrest D."/>
            <person name="Amos-Landgraf J."/>
            <person name="Schwartz D.C."/>
            <person name="Cheng Z."/>
            <person name="Lindblad-Toh K."/>
            <person name="Eichler E.E."/>
            <person name="Ponting C.P."/>
        </authorList>
    </citation>
    <scope>NUCLEOTIDE SEQUENCE [LARGE SCALE GENOMIC DNA]</scope>
    <source>
        <strain>C57BL/6J</strain>
    </source>
</reference>
<reference key="4">
    <citation type="journal article" date="1996" name="Genomics">
        <title>Cloning and characterization of mouse ACF7, a novel member of the dystonin subfamily of actin binding proteins.</title>
        <authorList>
            <person name="Bernier G."/>
            <person name="Mathieu M."/>
            <person name="De Repentigny Y."/>
            <person name="Vidal S.M."/>
            <person name="Kothary R."/>
        </authorList>
    </citation>
    <scope>NUCLEOTIDE SEQUENCE [MRNA] OF 1-3909 (ISOFORMS 2 AND 4)</scope>
    <scope>PARTIAL NUCLEOTIDE SEQUENCE [MRNA] (ISOFORM 3)</scope>
    <source>
        <strain>BALB/cJ</strain>
        <tissue>Brain</tissue>
    </source>
</reference>
<reference key="5">
    <citation type="submission" date="2007-04" db="UniProtKB">
        <authorList>
            <person name="Lubec G."/>
            <person name="Kang S.U."/>
        </authorList>
    </citation>
    <scope>PROTEIN SEQUENCE OF 881-888; 5824-5832 AND 6671-6678</scope>
    <scope>IDENTIFICATION BY MASS SPECTROMETRY</scope>
    <source>
        <strain>C57BL/6J</strain>
        <tissue>Brain</tissue>
    </source>
</reference>
<reference key="6">
    <citation type="journal article" date="2004" name="Mol. Cell. Proteomics">
        <title>Phosphoproteomic analysis of the developing mouse brain.</title>
        <authorList>
            <person name="Ballif B.A."/>
            <person name="Villen J."/>
            <person name="Beausoleil S.A."/>
            <person name="Schwartz D."/>
            <person name="Gygi S.P."/>
        </authorList>
    </citation>
    <scope>PHOSPHORYLATION [LARGE SCALE ANALYSIS] AT SER-280</scope>
    <scope>IDENTIFICATION BY MASS SPECTROMETRY [LARGE SCALE ANALYSIS]</scope>
    <source>
        <tissue>Embryonic brain</tissue>
    </source>
</reference>
<reference key="7">
    <citation type="journal article" date="2006" name="Genes Dev.">
        <title>The role of microtubule actin cross-linking factor 1 (MACF1) in the Wnt signaling pathway.</title>
        <authorList>
            <person name="Chen H.J."/>
            <person name="Lin C.M."/>
            <person name="Lin C.S."/>
            <person name="Perez-Olle R."/>
            <person name="Leung C.L."/>
            <person name="Liem R.K."/>
        </authorList>
    </citation>
    <scope>FUNCTION</scope>
    <scope>DISRUPTION PHENOTYPE</scope>
    <scope>DEVELOPMENTAL STAGE</scope>
    <scope>TISSUE SPECIFICITY</scope>
</reference>
<reference key="8">
    <citation type="journal article" date="2006" name="Mol. Cell. Proteomics">
        <title>Comprehensive identification of phosphorylation sites in postsynaptic density preparations.</title>
        <authorList>
            <person name="Trinidad J.C."/>
            <person name="Specht C.G."/>
            <person name="Thalhammer A."/>
            <person name="Schoepfer R."/>
            <person name="Burlingame A.L."/>
        </authorList>
    </citation>
    <scope>PHOSPHORYLATION [LARGE SCALE ANALYSIS] AT SER-280</scope>
    <scope>IDENTIFICATION BY MASS SPECTROMETRY [LARGE SCALE ANALYSIS]</scope>
    <source>
        <tissue>Brain</tissue>
    </source>
</reference>
<reference key="9">
    <citation type="journal article" date="2007" name="Mol. Cell. Proteomics">
        <title>Qualitative and quantitative analyses of protein phosphorylation in naive and stimulated mouse synaptosomal preparations.</title>
        <authorList>
            <person name="Munton R.P."/>
            <person name="Tweedie-Cullen R."/>
            <person name="Livingstone-Zatchej M."/>
            <person name="Weinandy F."/>
            <person name="Waidelich M."/>
            <person name="Longo D."/>
            <person name="Gehrig P."/>
            <person name="Potthast F."/>
            <person name="Rutishauser D."/>
            <person name="Gerrits B."/>
            <person name="Panse C."/>
            <person name="Schlapbach R."/>
            <person name="Mansuy I.M."/>
        </authorList>
    </citation>
    <scope>IDENTIFICATION BY MASS SPECTROMETRY [LARGE SCALE ANALYSIS]</scope>
    <source>
        <tissue>Brain cortex</tissue>
    </source>
</reference>
<reference key="10">
    <citation type="journal article" date="2007" name="Proc. Natl. Acad. Sci. U.S.A.">
        <title>Large-scale phosphorylation analysis of mouse liver.</title>
        <authorList>
            <person name="Villen J."/>
            <person name="Beausoleil S.A."/>
            <person name="Gerber S.A."/>
            <person name="Gygi S.P."/>
        </authorList>
    </citation>
    <scope>PHOSPHORYLATION [LARGE SCALE ANALYSIS] AT SER-3082; SER-3085; SER-7296 AND SER-7299</scope>
    <scope>IDENTIFICATION BY MASS SPECTROMETRY [LARGE SCALE ANALYSIS]</scope>
    <source>
        <tissue>Liver</tissue>
    </source>
</reference>
<reference key="11">
    <citation type="journal article" date="2008" name="Cell">
        <title>ACF7 regulates cytoskeletal-focal adhesion dynamics and migration and has ATPase activity.</title>
        <authorList>
            <person name="Wu X."/>
            <person name="Kodama A."/>
            <person name="Fuchs E."/>
        </authorList>
    </citation>
    <scope>FUNCTION</scope>
    <scope>SUBCELLULAR LOCATION</scope>
    <scope>INTERACTION WITH MAPRE1; CLASP1 AND CLASP2</scope>
</reference>
<reference key="12">
    <citation type="journal article" date="2010" name="Cell">
        <title>A tissue-specific atlas of mouse protein phosphorylation and expression.</title>
        <authorList>
            <person name="Huttlin E.L."/>
            <person name="Jedrychowski M.P."/>
            <person name="Elias J.E."/>
            <person name="Goswami T."/>
            <person name="Rad R."/>
            <person name="Beausoleil S.A."/>
            <person name="Villen J."/>
            <person name="Haas W."/>
            <person name="Sowa M.E."/>
            <person name="Gygi S.P."/>
        </authorList>
    </citation>
    <scope>PHOSPHORYLATION [LARGE SCALE ANALYSIS] AT SER-35; SER-57; SER-280; SER-1376; SER-2077; SER-2081; SER-3082; SER-3085; SER-3889; SER-4458; SER-4483; THR-5394; SER-5988; SER-6923; SER-7296 AND SER-7299</scope>
    <scope>PHOSPHORYLATION [LARGE SCALE ANALYSIS] AT THR-42 (ISOFORM 4)</scope>
    <scope>IDENTIFICATION BY MASS SPECTROMETRY [LARGE SCALE ANALYSIS]</scope>
    <source>
        <tissue>Brain</tissue>
        <tissue>Brown adipose tissue</tissue>
        <tissue>Heart</tissue>
        <tissue>Kidney</tissue>
        <tissue>Liver</tissue>
        <tissue>Lung</tissue>
        <tissue>Pancreas</tissue>
        <tissue>Spleen</tissue>
        <tissue>Testis</tissue>
    </source>
</reference>
<reference key="13">
    <citation type="journal article" date="2011" name="Cell">
        <title>Skin stem cells orchestrate directional migration by regulating microtubule-ACF7 connections through GSK3beta.</title>
        <authorList>
            <person name="Wu X."/>
            <person name="Shen Q.T."/>
            <person name="Oristian D.S."/>
            <person name="Lu C.P."/>
            <person name="Zheng Q."/>
            <person name="Wang H.W."/>
            <person name="Fuchs E."/>
        </authorList>
    </citation>
    <scope>FUNCTION</scope>
    <scope>PHOSPHORYLATION</scope>
    <scope>IDENTIFICATION BY MASS SPECTROMETRY</scope>
    <scope>SUBCELLULAR LOCATION</scope>
    <scope>TISSUE SPECIFICITY</scope>
</reference>
<reference key="14">
    <citation type="journal article" date="2016" name="Mol. Neurobiol.">
        <title>Microtubule-actin crosslinking factor 1 is required for dendritic arborization and axon outgrowth in the developing brain.</title>
        <authorList>
            <person name="Ka M."/>
            <person name="Kim W.Y."/>
        </authorList>
    </citation>
    <scope>FUNCTION</scope>
    <scope>DISRUPTION PHENOTYPE</scope>
</reference>
<proteinExistence type="evidence at protein level"/>